<comment type="function">
    <text evidence="1">Provides the (R)-glutamate required for cell wall biosynthesis.</text>
</comment>
<comment type="catalytic activity">
    <reaction evidence="1">
        <text>L-glutamate = D-glutamate</text>
        <dbReference type="Rhea" id="RHEA:12813"/>
        <dbReference type="ChEBI" id="CHEBI:29985"/>
        <dbReference type="ChEBI" id="CHEBI:29986"/>
        <dbReference type="EC" id="5.1.1.3"/>
    </reaction>
</comment>
<comment type="pathway">
    <text evidence="1">Cell wall biogenesis; peptidoglycan biosynthesis.</text>
</comment>
<comment type="similarity">
    <text evidence="1">Belongs to the aspartate/glutamate racemases family.</text>
</comment>
<dbReference type="EC" id="5.1.1.3" evidence="1"/>
<dbReference type="EMBL" id="CP000143">
    <property type="protein sequence ID" value="ABA79108.1"/>
    <property type="molecule type" value="Genomic_DNA"/>
</dbReference>
<dbReference type="RefSeq" id="WP_011337870.1">
    <property type="nucleotide sequence ID" value="NC_007493.2"/>
</dbReference>
<dbReference type="RefSeq" id="YP_353009.1">
    <property type="nucleotide sequence ID" value="NC_007493.2"/>
</dbReference>
<dbReference type="SMR" id="Q3J276"/>
<dbReference type="STRING" id="272943.RSP_2947"/>
<dbReference type="EnsemblBacteria" id="ABA79108">
    <property type="protein sequence ID" value="ABA79108"/>
    <property type="gene ID" value="RSP_2947"/>
</dbReference>
<dbReference type="GeneID" id="3720400"/>
<dbReference type="KEGG" id="rsp:RSP_2947"/>
<dbReference type="PATRIC" id="fig|272943.9.peg.1885"/>
<dbReference type="eggNOG" id="COG0796">
    <property type="taxonomic scope" value="Bacteria"/>
</dbReference>
<dbReference type="OrthoDB" id="9801055at2"/>
<dbReference type="PhylomeDB" id="Q3J276"/>
<dbReference type="UniPathway" id="UPA00219"/>
<dbReference type="Proteomes" id="UP000002703">
    <property type="component" value="Chromosome 1"/>
</dbReference>
<dbReference type="GO" id="GO:0008881">
    <property type="term" value="F:glutamate racemase activity"/>
    <property type="evidence" value="ECO:0007669"/>
    <property type="project" value="UniProtKB-UniRule"/>
</dbReference>
<dbReference type="GO" id="GO:0071555">
    <property type="term" value="P:cell wall organization"/>
    <property type="evidence" value="ECO:0007669"/>
    <property type="project" value="UniProtKB-KW"/>
</dbReference>
<dbReference type="GO" id="GO:0009252">
    <property type="term" value="P:peptidoglycan biosynthetic process"/>
    <property type="evidence" value="ECO:0007669"/>
    <property type="project" value="UniProtKB-UniRule"/>
</dbReference>
<dbReference type="GO" id="GO:0008360">
    <property type="term" value="P:regulation of cell shape"/>
    <property type="evidence" value="ECO:0007669"/>
    <property type="project" value="UniProtKB-KW"/>
</dbReference>
<dbReference type="Gene3D" id="3.40.50.1860">
    <property type="match status" value="2"/>
</dbReference>
<dbReference type="HAMAP" id="MF_00258">
    <property type="entry name" value="Glu_racemase"/>
    <property type="match status" value="1"/>
</dbReference>
<dbReference type="InterPro" id="IPR015942">
    <property type="entry name" value="Asp/Glu/hydantoin_racemase"/>
</dbReference>
<dbReference type="InterPro" id="IPR001920">
    <property type="entry name" value="Asp/Glu_race"/>
</dbReference>
<dbReference type="InterPro" id="IPR018187">
    <property type="entry name" value="Asp/Glu_racemase_AS_1"/>
</dbReference>
<dbReference type="InterPro" id="IPR004391">
    <property type="entry name" value="Glu_race"/>
</dbReference>
<dbReference type="PANTHER" id="PTHR21198">
    <property type="entry name" value="GLUTAMATE RACEMASE"/>
    <property type="match status" value="1"/>
</dbReference>
<dbReference type="PANTHER" id="PTHR21198:SF2">
    <property type="entry name" value="GLUTAMATE RACEMASE"/>
    <property type="match status" value="1"/>
</dbReference>
<dbReference type="Pfam" id="PF01177">
    <property type="entry name" value="Asp_Glu_race"/>
    <property type="match status" value="1"/>
</dbReference>
<dbReference type="SUPFAM" id="SSF53681">
    <property type="entry name" value="Aspartate/glutamate racemase"/>
    <property type="match status" value="2"/>
</dbReference>
<dbReference type="PROSITE" id="PS00923">
    <property type="entry name" value="ASP_GLU_RACEMASE_1"/>
    <property type="match status" value="1"/>
</dbReference>
<name>MURI_CERS4</name>
<keyword id="KW-0133">Cell shape</keyword>
<keyword id="KW-0961">Cell wall biogenesis/degradation</keyword>
<keyword id="KW-0413">Isomerase</keyword>
<keyword id="KW-0573">Peptidoglycan synthesis</keyword>
<keyword id="KW-1185">Reference proteome</keyword>
<proteinExistence type="inferred from homology"/>
<feature type="chain" id="PRO_1000078566" description="Glutamate racemase">
    <location>
        <begin position="1"/>
        <end position="270"/>
    </location>
</feature>
<feature type="active site" description="Proton donor/acceptor" evidence="1">
    <location>
        <position position="70"/>
    </location>
</feature>
<feature type="active site" description="Proton donor/acceptor" evidence="1">
    <location>
        <position position="194"/>
    </location>
</feature>
<feature type="binding site" evidence="1">
    <location>
        <begin position="7"/>
        <end position="8"/>
    </location>
    <ligand>
        <name>substrate</name>
    </ligand>
</feature>
<feature type="binding site" evidence="1">
    <location>
        <begin position="39"/>
        <end position="40"/>
    </location>
    <ligand>
        <name>substrate</name>
    </ligand>
</feature>
<feature type="binding site" evidence="1">
    <location>
        <begin position="71"/>
        <end position="72"/>
    </location>
    <ligand>
        <name>substrate</name>
    </ligand>
</feature>
<feature type="binding site" evidence="1">
    <location>
        <begin position="195"/>
        <end position="196"/>
    </location>
    <ligand>
        <name>substrate</name>
    </ligand>
</feature>
<sequence length="270" mass="29417">MAVGVFDSGLGGLTVLDAVQRRLPEVPFVYFGDNAHAPYGVRDADDIFHLTCAATERLWAEGCDLVILACNTASAAALKRMQETWIPKDKRVLGVFVPLIEALTERQWGDNSPPREVAVKHVALFATPATVASRAFQRELAFRAIGVDVEAQPCGGVVDAIEQGDEILAEALVRSHVEALKRRMPHPQAAILGCTHYPLMEPIFQEALGPEVSVYSQANLVAESLADYLARKPEFAGDGTESKFLTTGDPRSVSNKATQFLRRRITFEAA</sequence>
<reference key="1">
    <citation type="submission" date="2005-09" db="EMBL/GenBank/DDBJ databases">
        <title>Complete sequence of chromosome 1 of Rhodobacter sphaeroides 2.4.1.</title>
        <authorList>
            <person name="Copeland A."/>
            <person name="Lucas S."/>
            <person name="Lapidus A."/>
            <person name="Barry K."/>
            <person name="Detter J.C."/>
            <person name="Glavina T."/>
            <person name="Hammon N."/>
            <person name="Israni S."/>
            <person name="Pitluck S."/>
            <person name="Richardson P."/>
            <person name="Mackenzie C."/>
            <person name="Choudhary M."/>
            <person name="Larimer F."/>
            <person name="Hauser L.J."/>
            <person name="Land M."/>
            <person name="Donohue T.J."/>
            <person name="Kaplan S."/>
        </authorList>
    </citation>
    <scope>NUCLEOTIDE SEQUENCE [LARGE SCALE GENOMIC DNA]</scope>
    <source>
        <strain>ATCC 17023 / DSM 158 / JCM 6121 / CCUG 31486 / LMG 2827 / NBRC 12203 / NCIMB 8253 / ATH 2.4.1.</strain>
    </source>
</reference>
<evidence type="ECO:0000255" key="1">
    <source>
        <dbReference type="HAMAP-Rule" id="MF_00258"/>
    </source>
</evidence>
<protein>
    <recommendedName>
        <fullName evidence="1">Glutamate racemase</fullName>
        <ecNumber evidence="1">5.1.1.3</ecNumber>
    </recommendedName>
</protein>
<gene>
    <name evidence="1" type="primary">murI</name>
    <name type="ordered locus">RHOS4_15400</name>
    <name type="ORF">RSP_2947</name>
</gene>
<accession>Q3J276</accession>
<organism>
    <name type="scientific">Cereibacter sphaeroides (strain ATCC 17023 / DSM 158 / JCM 6121 / CCUG 31486 / LMG 2827 / NBRC 12203 / NCIMB 8253 / ATH 2.4.1.)</name>
    <name type="common">Rhodobacter sphaeroides</name>
    <dbReference type="NCBI Taxonomy" id="272943"/>
    <lineage>
        <taxon>Bacteria</taxon>
        <taxon>Pseudomonadati</taxon>
        <taxon>Pseudomonadota</taxon>
        <taxon>Alphaproteobacteria</taxon>
        <taxon>Rhodobacterales</taxon>
        <taxon>Paracoccaceae</taxon>
        <taxon>Cereibacter</taxon>
    </lineage>
</organism>